<feature type="signal peptide" evidence="1">
    <location>
        <begin position="1"/>
        <end position="21"/>
    </location>
</feature>
<feature type="chain" id="PRO_0000427595" description="Uncharacterized protein MT0518">
    <location>
        <begin position="22"/>
        <end position="280"/>
    </location>
</feature>
<accession>P9WKU0</accession>
<accession>L0T6N6</accession>
<accession>P64717</accession>
<accession>Q11163</accession>
<comment type="similarity">
    <text evidence="2">To M.leprae ML2432 and S.coelicolor SCO3347.</text>
</comment>
<dbReference type="EMBL" id="AE000516">
    <property type="protein sequence ID" value="AAK44741.1"/>
    <property type="molecule type" value="Genomic_DNA"/>
</dbReference>
<dbReference type="PIR" id="E70745">
    <property type="entry name" value="E70745"/>
</dbReference>
<dbReference type="RefSeq" id="WP_003402432.1">
    <property type="nucleotide sequence ID" value="NZ_KK341227.1"/>
</dbReference>
<dbReference type="SMR" id="P9WKU0"/>
<dbReference type="KEGG" id="mtc:MT0518"/>
<dbReference type="PATRIC" id="fig|83331.31.peg.548"/>
<dbReference type="HOGENOM" id="CLU_065571_0_0_11"/>
<dbReference type="Proteomes" id="UP000001020">
    <property type="component" value="Chromosome"/>
</dbReference>
<dbReference type="Gene3D" id="3.20.20.150">
    <property type="entry name" value="Divalent-metal-dependent TIM barrel enzymes"/>
    <property type="match status" value="1"/>
</dbReference>
<dbReference type="InterPro" id="IPR050312">
    <property type="entry name" value="IolE/XylAMocC-like"/>
</dbReference>
<dbReference type="InterPro" id="IPR036237">
    <property type="entry name" value="Xyl_isomerase-like_sf"/>
</dbReference>
<dbReference type="InterPro" id="IPR013022">
    <property type="entry name" value="Xyl_isomerase-like_TIM-brl"/>
</dbReference>
<dbReference type="PANTHER" id="PTHR12110:SF47">
    <property type="match status" value="1"/>
</dbReference>
<dbReference type="PANTHER" id="PTHR12110">
    <property type="entry name" value="HYDROXYPYRUVATE ISOMERASE"/>
    <property type="match status" value="1"/>
</dbReference>
<dbReference type="Pfam" id="PF01261">
    <property type="entry name" value="AP_endonuc_2"/>
    <property type="match status" value="1"/>
</dbReference>
<dbReference type="SUPFAM" id="SSF51658">
    <property type="entry name" value="Xylose isomerase-like"/>
    <property type="match status" value="1"/>
</dbReference>
<proteinExistence type="inferred from homology"/>
<evidence type="ECO:0000255" key="1"/>
<evidence type="ECO:0000305" key="2"/>
<name>Y498_MYCTO</name>
<organism>
    <name type="scientific">Mycobacterium tuberculosis (strain CDC 1551 / Oshkosh)</name>
    <dbReference type="NCBI Taxonomy" id="83331"/>
    <lineage>
        <taxon>Bacteria</taxon>
        <taxon>Bacillati</taxon>
        <taxon>Actinomycetota</taxon>
        <taxon>Actinomycetes</taxon>
        <taxon>Mycobacteriales</taxon>
        <taxon>Mycobacteriaceae</taxon>
        <taxon>Mycobacterium</taxon>
        <taxon>Mycobacterium tuberculosis complex</taxon>
    </lineage>
</organism>
<protein>
    <recommendedName>
        <fullName>Uncharacterized protein MT0518</fullName>
    </recommendedName>
</protein>
<reference key="1">
    <citation type="journal article" date="2002" name="J. Bacteriol.">
        <title>Whole-genome comparison of Mycobacterium tuberculosis clinical and laboratory strains.</title>
        <authorList>
            <person name="Fleischmann R.D."/>
            <person name="Alland D."/>
            <person name="Eisen J.A."/>
            <person name="Carpenter L."/>
            <person name="White O."/>
            <person name="Peterson J.D."/>
            <person name="DeBoy R.T."/>
            <person name="Dodson R.J."/>
            <person name="Gwinn M.L."/>
            <person name="Haft D.H."/>
            <person name="Hickey E.K."/>
            <person name="Kolonay J.F."/>
            <person name="Nelson W.C."/>
            <person name="Umayam L.A."/>
            <person name="Ermolaeva M.D."/>
            <person name="Salzberg S.L."/>
            <person name="Delcher A."/>
            <person name="Utterback T.R."/>
            <person name="Weidman J.F."/>
            <person name="Khouri H.M."/>
            <person name="Gill J."/>
            <person name="Mikula A."/>
            <person name="Bishai W."/>
            <person name="Jacobs W.R. Jr."/>
            <person name="Venter J.C."/>
            <person name="Fraser C.M."/>
        </authorList>
    </citation>
    <scope>NUCLEOTIDE SEQUENCE [LARGE SCALE GENOMIC DNA]</scope>
    <source>
        <strain>CDC 1551 / Oshkosh</strain>
    </source>
</reference>
<sequence length="280" mass="30466">MRPAIKVGLSTASVYPLRAEAAFEYADRLGYDGVELMVWGESVSQDIDAVRKLSRRYRVPVLSVHAPCLLISQRVWGANPILKLDRSVRAAEQLGAQTVVVHPPFRWQRRYAEGFSDQVAALEAASTVMVAVENMFPFRADRFFGAGQSRERMRKRGGGPGPAISAFAPSYDPLDGNHAHYTLDLSHTATAGTDSLDMARRMGPGLVHLHLCDGSGLPADEHLVPGRGTQPTAEVCQMLAGSGFVGHVVLEVSTSSARSANERESMLAESLQFARTHLLR</sequence>
<keyword id="KW-1185">Reference proteome</keyword>
<keyword id="KW-0732">Signal</keyword>
<gene>
    <name type="ordered locus">MT0518</name>
</gene>